<name>RLP24_YEAST</name>
<protein>
    <recommendedName>
        <fullName>Ribosome biogenesis protein RLP24</fullName>
    </recommendedName>
    <alternativeName>
        <fullName>Ribosomal protein L24-like</fullName>
    </alternativeName>
</protein>
<feature type="chain" id="PRO_0000136910" description="Ribosome biogenesis protein RLP24">
    <location>
        <begin position="1"/>
        <end position="199"/>
    </location>
</feature>
<feature type="region of interest" description="Disordered" evidence="1">
    <location>
        <begin position="147"/>
        <end position="182"/>
    </location>
</feature>
<feature type="compositionally biased region" description="Acidic residues" evidence="1">
    <location>
        <begin position="156"/>
        <end position="179"/>
    </location>
</feature>
<feature type="modified residue" description="Phosphoserine" evidence="5">
    <location>
        <position position="172"/>
    </location>
</feature>
<feature type="mutagenesis site" description="No defect in the interaction with AFG2 or in promoting AFG2 activation." evidence="3">
    <location>
        <begin position="2"/>
        <end position="146"/>
    </location>
</feature>
<feature type="mutagenesis site" description="Reduces interaction with AFG2. Loss of AFG2 activation." evidence="3">
    <location>
        <begin position="147"/>
        <end position="199"/>
    </location>
</feature>
<feature type="turn" evidence="7">
    <location>
        <begin position="7"/>
        <end position="9"/>
    </location>
</feature>
<feature type="strand" evidence="7">
    <location>
        <begin position="17"/>
        <end position="22"/>
    </location>
</feature>
<feature type="strand" evidence="7">
    <location>
        <begin position="28"/>
        <end position="30"/>
    </location>
</feature>
<feature type="helix" evidence="7">
    <location>
        <begin position="34"/>
        <end position="41"/>
    </location>
</feature>
<feature type="turn" evidence="6">
    <location>
        <begin position="46"/>
        <end position="48"/>
    </location>
</feature>
<feature type="helix" evidence="6">
    <location>
        <begin position="53"/>
        <end position="57"/>
    </location>
</feature>
<feature type="turn" evidence="6">
    <location>
        <begin position="58"/>
        <end position="60"/>
    </location>
</feature>
<feature type="helix" evidence="6">
    <location>
        <begin position="105"/>
        <end position="111"/>
    </location>
</feature>
<feature type="turn" evidence="6">
    <location>
        <begin position="112"/>
        <end position="114"/>
    </location>
</feature>
<feature type="helix" evidence="6">
    <location>
        <begin position="115"/>
        <end position="128"/>
    </location>
</feature>
<feature type="helix" evidence="6">
    <location>
        <begin position="131"/>
        <end position="137"/>
    </location>
</feature>
<sequence length="199" mass="23975">MRIYQCHFCSSPCYPGHGIMFVRNDAKEFRFCRSKCHKAFKQRRNPRKLKWTKAFRKAAGKELAVDSTLTFAQRRNVPVRYNRELVATTLKAMARIEEIRQKRERAFYKNRMRGNKEKDFLRDKKLVESNPELLRIREVEIARKLAKEQERAESVSEQEESEEEEEDMEIDSDEEEEEQLEKQKILLKNRRRNTKKIAF</sequence>
<gene>
    <name type="primary">RLP24</name>
    <name type="ordered locus">YLR009W</name>
</gene>
<organism>
    <name type="scientific">Saccharomyces cerevisiae (strain ATCC 204508 / S288c)</name>
    <name type="common">Baker's yeast</name>
    <dbReference type="NCBI Taxonomy" id="559292"/>
    <lineage>
        <taxon>Eukaryota</taxon>
        <taxon>Fungi</taxon>
        <taxon>Dikarya</taxon>
        <taxon>Ascomycota</taxon>
        <taxon>Saccharomycotina</taxon>
        <taxon>Saccharomycetes</taxon>
        <taxon>Saccharomycetales</taxon>
        <taxon>Saccharomycetaceae</taxon>
        <taxon>Saccharomyces</taxon>
    </lineage>
</organism>
<accession>Q07915</accession>
<accession>D6VY11</accession>
<evidence type="ECO:0000256" key="1">
    <source>
        <dbReference type="SAM" id="MobiDB-lite"/>
    </source>
</evidence>
<evidence type="ECO:0000269" key="2">
    <source>
    </source>
</evidence>
<evidence type="ECO:0000269" key="3">
    <source>
    </source>
</evidence>
<evidence type="ECO:0000305" key="4"/>
<evidence type="ECO:0007744" key="5">
    <source>
    </source>
</evidence>
<evidence type="ECO:0007829" key="6">
    <source>
        <dbReference type="PDB" id="7NAD"/>
    </source>
</evidence>
<evidence type="ECO:0007829" key="7">
    <source>
        <dbReference type="PDB" id="7NAF"/>
    </source>
</evidence>
<dbReference type="EMBL" id="Z73181">
    <property type="protein sequence ID" value="CAA97531.1"/>
    <property type="molecule type" value="Genomic_DNA"/>
</dbReference>
<dbReference type="EMBL" id="AY558197">
    <property type="protein sequence ID" value="AAS56523.1"/>
    <property type="molecule type" value="Genomic_DNA"/>
</dbReference>
<dbReference type="EMBL" id="BK006945">
    <property type="protein sequence ID" value="DAA09327.1"/>
    <property type="molecule type" value="Genomic_DNA"/>
</dbReference>
<dbReference type="PIR" id="S64831">
    <property type="entry name" value="S64831"/>
</dbReference>
<dbReference type="RefSeq" id="NP_013109.1">
    <property type="nucleotide sequence ID" value="NM_001181896.1"/>
</dbReference>
<dbReference type="PDB" id="3JCT">
    <property type="method" value="EM"/>
    <property type="resolution" value="3.08 A"/>
    <property type="chains" value="u=1-199"/>
</dbReference>
<dbReference type="PDB" id="4V7F">
    <property type="method" value="EM"/>
    <property type="resolution" value="8.70 A"/>
    <property type="chains" value="p=1-199"/>
</dbReference>
<dbReference type="PDB" id="5JCS">
    <property type="method" value="EM"/>
    <property type="resolution" value="9.50 A"/>
    <property type="chains" value="t=1-199"/>
</dbReference>
<dbReference type="PDB" id="6C0F">
    <property type="method" value="EM"/>
    <property type="resolution" value="3.70 A"/>
    <property type="chains" value="u=1-199"/>
</dbReference>
<dbReference type="PDB" id="6ELZ">
    <property type="method" value="EM"/>
    <property type="resolution" value="3.30 A"/>
    <property type="chains" value="u=1-199"/>
</dbReference>
<dbReference type="PDB" id="6EM1">
    <property type="method" value="EM"/>
    <property type="resolution" value="3.60 A"/>
    <property type="chains" value="u=1-199"/>
</dbReference>
<dbReference type="PDB" id="6EM4">
    <property type="method" value="EM"/>
    <property type="resolution" value="4.10 A"/>
    <property type="chains" value="u=1-199"/>
</dbReference>
<dbReference type="PDB" id="6EM5">
    <property type="method" value="EM"/>
    <property type="resolution" value="4.30 A"/>
    <property type="chains" value="u=1-199"/>
</dbReference>
<dbReference type="PDB" id="6FT6">
    <property type="method" value="EM"/>
    <property type="resolution" value="3.90 A"/>
    <property type="chains" value="u=1-199"/>
</dbReference>
<dbReference type="PDB" id="6M62">
    <property type="method" value="EM"/>
    <property type="resolution" value="3.20 A"/>
    <property type="chains" value="u=1-199"/>
</dbReference>
<dbReference type="PDB" id="6N8J">
    <property type="method" value="EM"/>
    <property type="resolution" value="3.50 A"/>
    <property type="chains" value="u=1-199"/>
</dbReference>
<dbReference type="PDB" id="6N8K">
    <property type="method" value="EM"/>
    <property type="resolution" value="3.60 A"/>
    <property type="chains" value="u=1-199"/>
</dbReference>
<dbReference type="PDB" id="6N8L">
    <property type="method" value="EM"/>
    <property type="resolution" value="3.60 A"/>
    <property type="chains" value="u=1-199"/>
</dbReference>
<dbReference type="PDB" id="6YLG">
    <property type="method" value="EM"/>
    <property type="resolution" value="3.00 A"/>
    <property type="chains" value="u=1-199"/>
</dbReference>
<dbReference type="PDB" id="6YLH">
    <property type="method" value="EM"/>
    <property type="resolution" value="3.10 A"/>
    <property type="chains" value="u=1-199"/>
</dbReference>
<dbReference type="PDB" id="6YLX">
    <property type="method" value="EM"/>
    <property type="resolution" value="3.90 A"/>
    <property type="chains" value="u=1-199"/>
</dbReference>
<dbReference type="PDB" id="6YLY">
    <property type="method" value="EM"/>
    <property type="resolution" value="3.80 A"/>
    <property type="chains" value="u=1-199"/>
</dbReference>
<dbReference type="PDB" id="7BT6">
    <property type="method" value="EM"/>
    <property type="resolution" value="3.12 A"/>
    <property type="chains" value="u=1-199"/>
</dbReference>
<dbReference type="PDB" id="7BTB">
    <property type="method" value="EM"/>
    <property type="resolution" value="3.22 A"/>
    <property type="chains" value="u=1-199"/>
</dbReference>
<dbReference type="PDB" id="7NAC">
    <property type="method" value="EM"/>
    <property type="resolution" value="3.04 A"/>
    <property type="chains" value="u=1-199"/>
</dbReference>
<dbReference type="PDB" id="7NAD">
    <property type="method" value="EM"/>
    <property type="resolution" value="3.04 A"/>
    <property type="chains" value="u=1-199"/>
</dbReference>
<dbReference type="PDB" id="7NAF">
    <property type="method" value="EM"/>
    <property type="resolution" value="3.13 A"/>
    <property type="chains" value="u=1-65"/>
</dbReference>
<dbReference type="PDB" id="7OF1">
    <property type="method" value="EM"/>
    <property type="resolution" value="3.10 A"/>
    <property type="chains" value="u=1-199"/>
</dbReference>
<dbReference type="PDB" id="7OH3">
    <property type="method" value="EM"/>
    <property type="resolution" value="3.40 A"/>
    <property type="chains" value="u=1-199"/>
</dbReference>
<dbReference type="PDB" id="7OHQ">
    <property type="method" value="EM"/>
    <property type="resolution" value="3.10 A"/>
    <property type="chains" value="u=1-199"/>
</dbReference>
<dbReference type="PDB" id="7OHR">
    <property type="method" value="EM"/>
    <property type="resolution" value="4.72 A"/>
    <property type="chains" value="u=1-199"/>
</dbReference>
<dbReference type="PDB" id="7OHS">
    <property type="method" value="EM"/>
    <property type="resolution" value="4.38 A"/>
    <property type="chains" value="u=1-199"/>
</dbReference>
<dbReference type="PDB" id="7OHT">
    <property type="method" value="EM"/>
    <property type="resolution" value="4.70 A"/>
    <property type="chains" value="u=1-199"/>
</dbReference>
<dbReference type="PDB" id="7OHU">
    <property type="method" value="EM"/>
    <property type="resolution" value="3.70 A"/>
    <property type="chains" value="u=1-199"/>
</dbReference>
<dbReference type="PDB" id="7OHV">
    <property type="method" value="EM"/>
    <property type="resolution" value="3.90 A"/>
    <property type="chains" value="u=1-199"/>
</dbReference>
<dbReference type="PDB" id="7OHX">
    <property type="method" value="EM"/>
    <property type="resolution" value="3.30 A"/>
    <property type="chains" value="u=1-199"/>
</dbReference>
<dbReference type="PDB" id="7OHY">
    <property type="method" value="EM"/>
    <property type="resolution" value="3.90 A"/>
    <property type="chains" value="u=1-199"/>
</dbReference>
<dbReference type="PDB" id="7R72">
    <property type="method" value="EM"/>
    <property type="resolution" value="3.07 A"/>
    <property type="chains" value="u=1-199"/>
</dbReference>
<dbReference type="PDB" id="7R7A">
    <property type="method" value="EM"/>
    <property type="resolution" value="3.04 A"/>
    <property type="chains" value="u=1-199"/>
</dbReference>
<dbReference type="PDB" id="7U0H">
    <property type="method" value="EM"/>
    <property type="resolution" value="2.76 A"/>
    <property type="chains" value="u=1-199"/>
</dbReference>
<dbReference type="PDB" id="7UG6">
    <property type="method" value="EM"/>
    <property type="resolution" value="2.90 A"/>
    <property type="chains" value="u=1-199"/>
</dbReference>
<dbReference type="PDB" id="7UOO">
    <property type="method" value="EM"/>
    <property type="resolution" value="2.34 A"/>
    <property type="chains" value="u=1-199"/>
</dbReference>
<dbReference type="PDB" id="7UQB">
    <property type="method" value="EM"/>
    <property type="resolution" value="2.43 A"/>
    <property type="chains" value="u=1-199"/>
</dbReference>
<dbReference type="PDB" id="7UQZ">
    <property type="method" value="EM"/>
    <property type="resolution" value="2.44 A"/>
    <property type="chains" value="u=1-199"/>
</dbReference>
<dbReference type="PDB" id="7V08">
    <property type="method" value="EM"/>
    <property type="resolution" value="2.36 A"/>
    <property type="chains" value="u=1-199"/>
</dbReference>
<dbReference type="PDB" id="7Z34">
    <property type="method" value="EM"/>
    <property type="resolution" value="3.80 A"/>
    <property type="chains" value="u=1-199"/>
</dbReference>
<dbReference type="PDB" id="8HFR">
    <property type="method" value="EM"/>
    <property type="resolution" value="2.64 A"/>
    <property type="chains" value="tB=1-199"/>
</dbReference>
<dbReference type="PDB" id="8V83">
    <property type="method" value="EM"/>
    <property type="resolution" value="2.53 A"/>
    <property type="chains" value="u=1-199"/>
</dbReference>
<dbReference type="PDB" id="8V84">
    <property type="method" value="EM"/>
    <property type="resolution" value="2.70 A"/>
    <property type="chains" value="u=1-199"/>
</dbReference>
<dbReference type="PDB" id="8V87">
    <property type="method" value="EM"/>
    <property type="resolution" value="2.66 A"/>
    <property type="chains" value="u=1-199"/>
</dbReference>
<dbReference type="PDBsum" id="3JCT"/>
<dbReference type="PDBsum" id="4V7F"/>
<dbReference type="PDBsum" id="5JCS"/>
<dbReference type="PDBsum" id="6C0F"/>
<dbReference type="PDBsum" id="6ELZ"/>
<dbReference type="PDBsum" id="6EM1"/>
<dbReference type="PDBsum" id="6EM4"/>
<dbReference type="PDBsum" id="6EM5"/>
<dbReference type="PDBsum" id="6FT6"/>
<dbReference type="PDBsum" id="6M62"/>
<dbReference type="PDBsum" id="6N8J"/>
<dbReference type="PDBsum" id="6N8K"/>
<dbReference type="PDBsum" id="6N8L"/>
<dbReference type="PDBsum" id="6YLG"/>
<dbReference type="PDBsum" id="6YLH"/>
<dbReference type="PDBsum" id="6YLX"/>
<dbReference type="PDBsum" id="6YLY"/>
<dbReference type="PDBsum" id="7BT6"/>
<dbReference type="PDBsum" id="7BTB"/>
<dbReference type="PDBsum" id="7NAC"/>
<dbReference type="PDBsum" id="7NAD"/>
<dbReference type="PDBsum" id="7NAF"/>
<dbReference type="PDBsum" id="7OF1"/>
<dbReference type="PDBsum" id="7OH3"/>
<dbReference type="PDBsum" id="7OHQ"/>
<dbReference type="PDBsum" id="7OHR"/>
<dbReference type="PDBsum" id="7OHS"/>
<dbReference type="PDBsum" id="7OHT"/>
<dbReference type="PDBsum" id="7OHU"/>
<dbReference type="PDBsum" id="7OHV"/>
<dbReference type="PDBsum" id="7OHX"/>
<dbReference type="PDBsum" id="7OHY"/>
<dbReference type="PDBsum" id="7R72"/>
<dbReference type="PDBsum" id="7R7A"/>
<dbReference type="PDBsum" id="7U0H"/>
<dbReference type="PDBsum" id="7UG6"/>
<dbReference type="PDBsum" id="7UOO"/>
<dbReference type="PDBsum" id="7UQB"/>
<dbReference type="PDBsum" id="7UQZ"/>
<dbReference type="PDBsum" id="7V08"/>
<dbReference type="PDBsum" id="7Z34"/>
<dbReference type="PDBsum" id="8HFR"/>
<dbReference type="PDBsum" id="8V83"/>
<dbReference type="PDBsum" id="8V84"/>
<dbReference type="PDBsum" id="8V87"/>
<dbReference type="EMDB" id="EMD-0369"/>
<dbReference type="EMDB" id="EMD-0370"/>
<dbReference type="EMDB" id="EMD-0371"/>
<dbReference type="EMDB" id="EMD-10838"/>
<dbReference type="EMDB" id="EMD-10839"/>
<dbReference type="EMDB" id="EMD-10841"/>
<dbReference type="EMDB" id="EMD-10842"/>
<dbReference type="EMDB" id="EMD-12866"/>
<dbReference type="EMDB" id="EMD-12892"/>
<dbReference type="EMDB" id="EMD-12905"/>
<dbReference type="EMDB" id="EMD-12906"/>
<dbReference type="EMDB" id="EMD-12907"/>
<dbReference type="EMDB" id="EMD-12908"/>
<dbReference type="EMDB" id="EMD-12909"/>
<dbReference type="EMDB" id="EMD-12910"/>
<dbReference type="EMDB" id="EMD-12912"/>
<dbReference type="EMDB" id="EMD-12913"/>
<dbReference type="EMDB" id="EMD-14471"/>
<dbReference type="EMDB" id="EMD-24269"/>
<dbReference type="EMDB" id="EMD-24271"/>
<dbReference type="EMDB" id="EMD-24290"/>
<dbReference type="EMDB" id="EMD-24296"/>
<dbReference type="EMDB" id="EMD-26259"/>
<dbReference type="EMDB" id="EMD-26485"/>
<dbReference type="EMDB" id="EMD-26651"/>
<dbReference type="EMDB" id="EMD-26686"/>
<dbReference type="EMDB" id="EMD-26703"/>
<dbReference type="EMDB" id="EMD-30108"/>
<dbReference type="EMDB" id="EMD-30170"/>
<dbReference type="EMDB" id="EMD-30174"/>
<dbReference type="EMDB" id="EMD-34725"/>
<dbReference type="EMDB" id="EMD-43017"/>
<dbReference type="EMDB" id="EMD-4302"/>
<dbReference type="EMDB" id="EMD-43021"/>
<dbReference type="EMDB" id="EMD-43027"/>
<dbReference type="EMDB" id="EMD-7324"/>
<dbReference type="SMR" id="Q07915"/>
<dbReference type="BioGRID" id="31282">
    <property type="interactions" value="366"/>
</dbReference>
<dbReference type="DIP" id="DIP-4748N"/>
<dbReference type="FunCoup" id="Q07915">
    <property type="interactions" value="1230"/>
</dbReference>
<dbReference type="IntAct" id="Q07915">
    <property type="interactions" value="66"/>
</dbReference>
<dbReference type="MINT" id="Q07915"/>
<dbReference type="STRING" id="4932.YLR009W"/>
<dbReference type="iPTMnet" id="Q07915"/>
<dbReference type="PaxDb" id="4932-YLR009W"/>
<dbReference type="PeptideAtlas" id="Q07915"/>
<dbReference type="EnsemblFungi" id="YLR009W_mRNA">
    <property type="protein sequence ID" value="YLR009W"/>
    <property type="gene ID" value="YLR009W"/>
</dbReference>
<dbReference type="GeneID" id="850695"/>
<dbReference type="KEGG" id="sce:YLR009W"/>
<dbReference type="AGR" id="SGD:S000003999"/>
<dbReference type="SGD" id="S000003999">
    <property type="gene designation" value="RLP24"/>
</dbReference>
<dbReference type="VEuPathDB" id="FungiDB:YLR009W"/>
<dbReference type="eggNOG" id="KOG1723">
    <property type="taxonomic scope" value="Eukaryota"/>
</dbReference>
<dbReference type="GeneTree" id="ENSGT00950000183105"/>
<dbReference type="HOGENOM" id="CLU_089419_1_1_1"/>
<dbReference type="InParanoid" id="Q07915"/>
<dbReference type="OMA" id="NAGKEMT"/>
<dbReference type="OrthoDB" id="10262490at2759"/>
<dbReference type="BioCyc" id="YEAST:G3O-32170-MONOMER"/>
<dbReference type="BioGRID-ORCS" id="850695">
    <property type="hits" value="2 hits in 10 CRISPR screens"/>
</dbReference>
<dbReference type="PRO" id="PR:Q07915"/>
<dbReference type="Proteomes" id="UP000002311">
    <property type="component" value="Chromosome XII"/>
</dbReference>
<dbReference type="RNAct" id="Q07915">
    <property type="molecule type" value="protein"/>
</dbReference>
<dbReference type="GO" id="GO:0005737">
    <property type="term" value="C:cytoplasm"/>
    <property type="evidence" value="ECO:0007669"/>
    <property type="project" value="UniProtKB-SubCell"/>
</dbReference>
<dbReference type="GO" id="GO:0005730">
    <property type="term" value="C:nucleolus"/>
    <property type="evidence" value="ECO:0000314"/>
    <property type="project" value="SGD"/>
</dbReference>
<dbReference type="GO" id="GO:0030687">
    <property type="term" value="C:preribosome, large subunit precursor"/>
    <property type="evidence" value="ECO:0000314"/>
    <property type="project" value="SGD"/>
</dbReference>
<dbReference type="GO" id="GO:0001671">
    <property type="term" value="F:ATPase activator activity"/>
    <property type="evidence" value="ECO:0000314"/>
    <property type="project" value="SGD"/>
</dbReference>
<dbReference type="GO" id="GO:0051117">
    <property type="term" value="F:ATPase binding"/>
    <property type="evidence" value="ECO:0000353"/>
    <property type="project" value="UniProtKB"/>
</dbReference>
<dbReference type="GO" id="GO:0003735">
    <property type="term" value="F:structural constituent of ribosome"/>
    <property type="evidence" value="ECO:0007669"/>
    <property type="project" value="InterPro"/>
</dbReference>
<dbReference type="GO" id="GO:1902626">
    <property type="term" value="P:assembly of large subunit precursor of preribosome"/>
    <property type="evidence" value="ECO:0000315"/>
    <property type="project" value="SGD"/>
</dbReference>
<dbReference type="GO" id="GO:0032781">
    <property type="term" value="P:positive regulation of ATP-dependent activity"/>
    <property type="evidence" value="ECO:0000315"/>
    <property type="project" value="UniProtKB"/>
</dbReference>
<dbReference type="GO" id="GO:0042273">
    <property type="term" value="P:ribosomal large subunit biogenesis"/>
    <property type="evidence" value="ECO:0000315"/>
    <property type="project" value="SGD"/>
</dbReference>
<dbReference type="CDD" id="cd00472">
    <property type="entry name" value="Ribosomal_L24e_L24"/>
    <property type="match status" value="1"/>
</dbReference>
<dbReference type="FunFam" id="2.30.170.20:FF:000001">
    <property type="entry name" value="probable ribosome biogenesis protein RLP24"/>
    <property type="match status" value="1"/>
</dbReference>
<dbReference type="Gene3D" id="2.30.170.20">
    <property type="entry name" value="Ribosomal protein L24e"/>
    <property type="match status" value="1"/>
</dbReference>
<dbReference type="InterPro" id="IPR038630">
    <property type="entry name" value="L24e/L24_sf"/>
</dbReference>
<dbReference type="InterPro" id="IPR056366">
    <property type="entry name" value="Ribosomal_eL24"/>
</dbReference>
<dbReference type="InterPro" id="IPR000988">
    <property type="entry name" value="Ribosomal_eL24-rel_N"/>
</dbReference>
<dbReference type="InterPro" id="IPR011017">
    <property type="entry name" value="TRASH_dom"/>
</dbReference>
<dbReference type="PANTHER" id="PTHR10792">
    <property type="entry name" value="60S RIBOSOMAL PROTEIN L24"/>
    <property type="match status" value="1"/>
</dbReference>
<dbReference type="PANTHER" id="PTHR10792:SF8">
    <property type="entry name" value="RIBOSOME BIOGENESIS PROTEIN RLP24-RELATED"/>
    <property type="match status" value="1"/>
</dbReference>
<dbReference type="Pfam" id="PF01246">
    <property type="entry name" value="Ribosomal_L24e"/>
    <property type="match status" value="1"/>
</dbReference>
<dbReference type="SMART" id="SM00746">
    <property type="entry name" value="TRASH"/>
    <property type="match status" value="1"/>
</dbReference>
<dbReference type="SUPFAM" id="SSF57716">
    <property type="entry name" value="Glucocorticoid receptor-like (DNA-binding domain)"/>
    <property type="match status" value="1"/>
</dbReference>
<comment type="function">
    <text evidence="2 3">Involved in the biogenesis of the 60S ribosomal subunit (PubMed:12808088, PubMed:23185031). Ensures the docking of NOG1 to pre-60S ribosomal particles (PubMed:12808088). Activates and recruits ATPase AFG2 to cytoplasmic pre-60S ribosomal particles (PubMed:23185031).</text>
</comment>
<comment type="subunit">
    <text evidence="2 3">Associated with nucleolar and cytoplasmic pre-60S particles (PubMed:12808088). At the end of biogenesis it dissociates from cytoplasmic pre-60S particles and is likely to be exchanged for its ribosomal homolog, RPL24 (PubMed:12808088, PubMed:23185031). Interacts (via C-terminus) with AFG2 (hexameric form); the interaction is direct, recruits AFG2 to pre-60S ribosomal particles and promotes AFG2 ATPase activity and RLP24 release from pre-60S ribosomal particles (PubMed:23185031). Interacts with NOG1; the interaction is direct (PubMed:12808088).</text>
</comment>
<comment type="subcellular location">
    <subcellularLocation>
        <location evidence="2">Cytoplasm</location>
    </subcellularLocation>
    <subcellularLocation>
        <location evidence="2">Nucleus</location>
    </subcellularLocation>
    <text evidence="2">Shuttles between the nucleus and the cytoplasm.</text>
</comment>
<comment type="similarity">
    <text evidence="4">Belongs to the eukaryotic ribosomal protein eL24 family.</text>
</comment>
<keyword id="KW-0002">3D-structure</keyword>
<keyword id="KW-0963">Cytoplasm</keyword>
<keyword id="KW-0539">Nucleus</keyword>
<keyword id="KW-0597">Phosphoprotein</keyword>
<keyword id="KW-1185">Reference proteome</keyword>
<keyword id="KW-0690">Ribosome biogenesis</keyword>
<proteinExistence type="evidence at protein level"/>
<reference key="1">
    <citation type="journal article" date="1997" name="Nature">
        <title>The nucleotide sequence of Saccharomyces cerevisiae chromosome XII.</title>
        <authorList>
            <person name="Johnston M."/>
            <person name="Hillier L.W."/>
            <person name="Riles L."/>
            <person name="Albermann K."/>
            <person name="Andre B."/>
            <person name="Ansorge W."/>
            <person name="Benes V."/>
            <person name="Brueckner M."/>
            <person name="Delius H."/>
            <person name="Dubois E."/>
            <person name="Duesterhoeft A."/>
            <person name="Entian K.-D."/>
            <person name="Floeth M."/>
            <person name="Goffeau A."/>
            <person name="Hebling U."/>
            <person name="Heumann K."/>
            <person name="Heuss-Neitzel D."/>
            <person name="Hilbert H."/>
            <person name="Hilger F."/>
            <person name="Kleine K."/>
            <person name="Koetter P."/>
            <person name="Louis E.J."/>
            <person name="Messenguy F."/>
            <person name="Mewes H.-W."/>
            <person name="Miosga T."/>
            <person name="Moestl D."/>
            <person name="Mueller-Auer S."/>
            <person name="Nentwich U."/>
            <person name="Obermaier B."/>
            <person name="Piravandi E."/>
            <person name="Pohl T.M."/>
            <person name="Portetelle D."/>
            <person name="Purnelle B."/>
            <person name="Rechmann S."/>
            <person name="Rieger M."/>
            <person name="Rinke M."/>
            <person name="Rose M."/>
            <person name="Scharfe M."/>
            <person name="Scherens B."/>
            <person name="Scholler P."/>
            <person name="Schwager C."/>
            <person name="Schwarz S."/>
            <person name="Underwood A.P."/>
            <person name="Urrestarazu L.A."/>
            <person name="Vandenbol M."/>
            <person name="Verhasselt P."/>
            <person name="Vierendeels F."/>
            <person name="Voet M."/>
            <person name="Volckaert G."/>
            <person name="Voss H."/>
            <person name="Wambutt R."/>
            <person name="Wedler E."/>
            <person name="Wedler H."/>
            <person name="Zimmermann F.K."/>
            <person name="Zollner A."/>
            <person name="Hani J."/>
            <person name="Hoheisel J.D."/>
        </authorList>
    </citation>
    <scope>NUCLEOTIDE SEQUENCE [LARGE SCALE GENOMIC DNA]</scope>
    <source>
        <strain>ATCC 204508 / S288c</strain>
    </source>
</reference>
<reference key="2">
    <citation type="journal article" date="2014" name="G3 (Bethesda)">
        <title>The reference genome sequence of Saccharomyces cerevisiae: Then and now.</title>
        <authorList>
            <person name="Engel S.R."/>
            <person name="Dietrich F.S."/>
            <person name="Fisk D.G."/>
            <person name="Binkley G."/>
            <person name="Balakrishnan R."/>
            <person name="Costanzo M.C."/>
            <person name="Dwight S.S."/>
            <person name="Hitz B.C."/>
            <person name="Karra K."/>
            <person name="Nash R.S."/>
            <person name="Weng S."/>
            <person name="Wong E.D."/>
            <person name="Lloyd P."/>
            <person name="Skrzypek M.S."/>
            <person name="Miyasato S.R."/>
            <person name="Simison M."/>
            <person name="Cherry J.M."/>
        </authorList>
    </citation>
    <scope>GENOME REANNOTATION</scope>
    <source>
        <strain>ATCC 204508 / S288c</strain>
    </source>
</reference>
<reference key="3">
    <citation type="journal article" date="2007" name="Genome Res.">
        <title>Approaching a complete repository of sequence-verified protein-encoding clones for Saccharomyces cerevisiae.</title>
        <authorList>
            <person name="Hu Y."/>
            <person name="Rolfs A."/>
            <person name="Bhullar B."/>
            <person name="Murthy T.V.S."/>
            <person name="Zhu C."/>
            <person name="Berger M.F."/>
            <person name="Camargo A.A."/>
            <person name="Kelley F."/>
            <person name="McCarron S."/>
            <person name="Jepson D."/>
            <person name="Richardson A."/>
            <person name="Raphael J."/>
            <person name="Moreira D."/>
            <person name="Taycher E."/>
            <person name="Zuo D."/>
            <person name="Mohr S."/>
            <person name="Kane M.F."/>
            <person name="Williamson J."/>
            <person name="Simpson A.J.G."/>
            <person name="Bulyk M.L."/>
            <person name="Harlow E."/>
            <person name="Marsischky G."/>
            <person name="Kolodner R.D."/>
            <person name="LaBaer J."/>
        </authorList>
    </citation>
    <scope>NUCLEOTIDE SEQUENCE [GENOMIC DNA]</scope>
    <source>
        <strain>ATCC 204508 / S288c</strain>
    </source>
</reference>
<reference key="4">
    <citation type="journal article" date="2003" name="Mol. Cell. Biol.">
        <title>Sequential protein association with nascent 60S ribosomal particles.</title>
        <authorList>
            <person name="Saveanu C."/>
            <person name="Namane A."/>
            <person name="Gleizes P.-E."/>
            <person name="Lebreton A."/>
            <person name="Rousselle J.-C."/>
            <person name="Noaillac-Depeyre J."/>
            <person name="Gas N."/>
            <person name="Jacquier A."/>
            <person name="Fromont-Racine M."/>
        </authorList>
    </citation>
    <scope>FUNCTION</scope>
    <scope>SUBCELLULAR LOCATION</scope>
    <scope>INTERACTION WITH NOG1</scope>
</reference>
<reference key="5">
    <citation type="journal article" date="2008" name="Mol. Cell. Proteomics">
        <title>A multidimensional chromatography technology for in-depth phosphoproteome analysis.</title>
        <authorList>
            <person name="Albuquerque C.P."/>
            <person name="Smolka M.B."/>
            <person name="Payne S.H."/>
            <person name="Bafna V."/>
            <person name="Eng J."/>
            <person name="Zhou H."/>
        </authorList>
    </citation>
    <scope>PHOSPHORYLATION [LARGE SCALE ANALYSIS] AT SER-172</scope>
    <scope>IDENTIFICATION BY MASS SPECTROMETRY [LARGE SCALE ANALYSIS]</scope>
</reference>
<reference key="6">
    <citation type="journal article" date="2012" name="J. Cell Biol.">
        <title>Rlp24 activates the AAA-ATPase Drg1 to initiate cytoplasmic pre-60S maturation.</title>
        <authorList>
            <person name="Kappel L."/>
            <person name="Loibl M."/>
            <person name="Zisser G."/>
            <person name="Klein I."/>
            <person name="Fruhmann G."/>
            <person name="Gruber C."/>
            <person name="Unterweger S."/>
            <person name="Rechberger G."/>
            <person name="Pertschy B."/>
            <person name="Bergler H."/>
        </authorList>
    </citation>
    <scope>FUNCTION</scope>
    <scope>INTERACTION WITH AFG2</scope>
    <scope>MUTAGENESIS OF 2-ARG--ALA-146 AND 146-LYS--PHE-199</scope>
</reference>